<evidence type="ECO:0000250" key="1"/>
<evidence type="ECO:0000255" key="2">
    <source>
        <dbReference type="HAMAP-Rule" id="MF_00118"/>
    </source>
</evidence>
<accession>A4TS36</accession>
<name>EFTU2_YERPP</name>
<protein>
    <recommendedName>
        <fullName evidence="2">Elongation factor Tu 2</fullName>
        <shortName evidence="2">EF-Tu 2</shortName>
        <ecNumber evidence="2">3.6.5.3</ecNumber>
    </recommendedName>
</protein>
<comment type="function">
    <text evidence="2">GTP hydrolase that promotes the GTP-dependent binding of aminoacyl-tRNA to the A-site of ribosomes during protein biosynthesis.</text>
</comment>
<comment type="catalytic activity">
    <reaction evidence="2">
        <text>GTP + H2O = GDP + phosphate + H(+)</text>
        <dbReference type="Rhea" id="RHEA:19669"/>
        <dbReference type="ChEBI" id="CHEBI:15377"/>
        <dbReference type="ChEBI" id="CHEBI:15378"/>
        <dbReference type="ChEBI" id="CHEBI:37565"/>
        <dbReference type="ChEBI" id="CHEBI:43474"/>
        <dbReference type="ChEBI" id="CHEBI:58189"/>
        <dbReference type="EC" id="3.6.5.3"/>
    </reaction>
    <physiologicalReaction direction="left-to-right" evidence="2">
        <dbReference type="Rhea" id="RHEA:19670"/>
    </physiologicalReaction>
</comment>
<comment type="subunit">
    <text evidence="2">Monomer.</text>
</comment>
<comment type="subcellular location">
    <subcellularLocation>
        <location evidence="2">Cytoplasm</location>
    </subcellularLocation>
</comment>
<comment type="similarity">
    <text evidence="2">Belongs to the TRAFAC class translation factor GTPase superfamily. Classic translation factor GTPase family. EF-Tu/EF-1A subfamily.</text>
</comment>
<feature type="chain" id="PRO_0000337588" description="Elongation factor Tu 2">
    <location>
        <begin position="1"/>
        <end position="394"/>
    </location>
</feature>
<feature type="domain" description="tr-type G">
    <location>
        <begin position="10"/>
        <end position="204"/>
    </location>
</feature>
<feature type="region of interest" description="G1" evidence="1">
    <location>
        <begin position="19"/>
        <end position="26"/>
    </location>
</feature>
<feature type="region of interest" description="G2" evidence="1">
    <location>
        <begin position="60"/>
        <end position="64"/>
    </location>
</feature>
<feature type="region of interest" description="G3" evidence="1">
    <location>
        <begin position="81"/>
        <end position="84"/>
    </location>
</feature>
<feature type="region of interest" description="G4" evidence="1">
    <location>
        <begin position="136"/>
        <end position="139"/>
    </location>
</feature>
<feature type="region of interest" description="G5" evidence="1">
    <location>
        <begin position="174"/>
        <end position="176"/>
    </location>
</feature>
<feature type="binding site" evidence="2">
    <location>
        <begin position="19"/>
        <end position="26"/>
    </location>
    <ligand>
        <name>GTP</name>
        <dbReference type="ChEBI" id="CHEBI:37565"/>
    </ligand>
</feature>
<feature type="binding site" evidence="2">
    <location>
        <position position="26"/>
    </location>
    <ligand>
        <name>Mg(2+)</name>
        <dbReference type="ChEBI" id="CHEBI:18420"/>
    </ligand>
</feature>
<feature type="binding site" evidence="2">
    <location>
        <begin position="81"/>
        <end position="85"/>
    </location>
    <ligand>
        <name>GTP</name>
        <dbReference type="ChEBI" id="CHEBI:37565"/>
    </ligand>
</feature>
<feature type="binding site" evidence="2">
    <location>
        <begin position="136"/>
        <end position="139"/>
    </location>
    <ligand>
        <name>GTP</name>
        <dbReference type="ChEBI" id="CHEBI:37565"/>
    </ligand>
</feature>
<sequence>MSKEKFERTKPHVNVGTIGHVDHGKTTLTAAITTVLAKTYGGSARAFDQIDNAPEEKARGITINTSHVEYDTPARHYAHVDCPGHADYVKNMITGAAQMDGAILVVAATDGPMPQTREHILLGRQVGVPYIIVFLNKCDMVDDEELLELVEMEVRELLSQYDFPGDDTPVIRGSALKALEGDAEWEAKIIELAEALDSYIPQPERAIDRPFLLPIEDVFSISGRGTVVTGRVERGIVKVGEEVEIVGIIDTIKTTCTGVEMFRKLLDEGRAGENVGVLLRGTKRDDVQRGQVLAKPGSIKPHTKFESEVYILSKDEGGRHTPFFKGYRPQFYFRTTDVTGTIELPEGVEMVMPGDNVNMVVNLIAPIAMDDGLRFAIREGGRTVGAGVVAKVIE</sequence>
<gene>
    <name evidence="2" type="primary">tuf2</name>
    <name type="ordered locus">YPDSF_3752</name>
</gene>
<organism>
    <name type="scientific">Yersinia pestis (strain Pestoides F)</name>
    <dbReference type="NCBI Taxonomy" id="386656"/>
    <lineage>
        <taxon>Bacteria</taxon>
        <taxon>Pseudomonadati</taxon>
        <taxon>Pseudomonadota</taxon>
        <taxon>Gammaproteobacteria</taxon>
        <taxon>Enterobacterales</taxon>
        <taxon>Yersiniaceae</taxon>
        <taxon>Yersinia</taxon>
    </lineage>
</organism>
<reference key="1">
    <citation type="submission" date="2007-02" db="EMBL/GenBank/DDBJ databases">
        <title>Complete sequence of chromosome of Yersinia pestis Pestoides F.</title>
        <authorList>
            <consortium name="US DOE Joint Genome Institute"/>
            <person name="Copeland A."/>
            <person name="Lucas S."/>
            <person name="Lapidus A."/>
            <person name="Barry K."/>
            <person name="Detter J.C."/>
            <person name="Glavina del Rio T."/>
            <person name="Hammon N."/>
            <person name="Israni S."/>
            <person name="Dalin E."/>
            <person name="Tice H."/>
            <person name="Pitluck S."/>
            <person name="Di Bartolo G."/>
            <person name="Chain P."/>
            <person name="Malfatti S."/>
            <person name="Shin M."/>
            <person name="Vergez L."/>
            <person name="Schmutz J."/>
            <person name="Larimer F."/>
            <person name="Land M."/>
            <person name="Hauser L."/>
            <person name="Worsham P."/>
            <person name="Chu M."/>
            <person name="Bearden S."/>
            <person name="Garcia E."/>
            <person name="Richardson P."/>
        </authorList>
    </citation>
    <scope>NUCLEOTIDE SEQUENCE [LARGE SCALE GENOMIC DNA]</scope>
    <source>
        <strain>Pestoides F</strain>
    </source>
</reference>
<keyword id="KW-0963">Cytoplasm</keyword>
<keyword id="KW-0251">Elongation factor</keyword>
<keyword id="KW-0342">GTP-binding</keyword>
<keyword id="KW-0378">Hydrolase</keyword>
<keyword id="KW-0460">Magnesium</keyword>
<keyword id="KW-0479">Metal-binding</keyword>
<keyword id="KW-0547">Nucleotide-binding</keyword>
<keyword id="KW-0648">Protein biosynthesis</keyword>
<dbReference type="EC" id="3.6.5.3" evidence="2"/>
<dbReference type="EMBL" id="CP000668">
    <property type="protein sequence ID" value="ABP42098.1"/>
    <property type="molecule type" value="Genomic_DNA"/>
</dbReference>
<dbReference type="SMR" id="A4TS36"/>
<dbReference type="KEGG" id="ypp:YPDSF_3752"/>
<dbReference type="PATRIC" id="fig|386656.14.peg.771"/>
<dbReference type="GO" id="GO:0005829">
    <property type="term" value="C:cytosol"/>
    <property type="evidence" value="ECO:0007669"/>
    <property type="project" value="TreeGrafter"/>
</dbReference>
<dbReference type="GO" id="GO:0005525">
    <property type="term" value="F:GTP binding"/>
    <property type="evidence" value="ECO:0007669"/>
    <property type="project" value="UniProtKB-UniRule"/>
</dbReference>
<dbReference type="GO" id="GO:0003924">
    <property type="term" value="F:GTPase activity"/>
    <property type="evidence" value="ECO:0007669"/>
    <property type="project" value="InterPro"/>
</dbReference>
<dbReference type="GO" id="GO:0097216">
    <property type="term" value="F:guanosine tetraphosphate binding"/>
    <property type="evidence" value="ECO:0007669"/>
    <property type="project" value="UniProtKB-ARBA"/>
</dbReference>
<dbReference type="GO" id="GO:0003746">
    <property type="term" value="F:translation elongation factor activity"/>
    <property type="evidence" value="ECO:0007669"/>
    <property type="project" value="UniProtKB-UniRule"/>
</dbReference>
<dbReference type="CDD" id="cd01884">
    <property type="entry name" value="EF_Tu"/>
    <property type="match status" value="1"/>
</dbReference>
<dbReference type="CDD" id="cd03697">
    <property type="entry name" value="EFTU_II"/>
    <property type="match status" value="1"/>
</dbReference>
<dbReference type="CDD" id="cd03707">
    <property type="entry name" value="EFTU_III"/>
    <property type="match status" value="1"/>
</dbReference>
<dbReference type="FunFam" id="2.40.30.10:FF:000001">
    <property type="entry name" value="Elongation factor Tu"/>
    <property type="match status" value="1"/>
</dbReference>
<dbReference type="FunFam" id="3.40.50.300:FF:000003">
    <property type="entry name" value="Elongation factor Tu"/>
    <property type="match status" value="1"/>
</dbReference>
<dbReference type="Gene3D" id="3.40.50.300">
    <property type="entry name" value="P-loop containing nucleotide triphosphate hydrolases"/>
    <property type="match status" value="1"/>
</dbReference>
<dbReference type="Gene3D" id="2.40.30.10">
    <property type="entry name" value="Translation factors"/>
    <property type="match status" value="2"/>
</dbReference>
<dbReference type="HAMAP" id="MF_00118_B">
    <property type="entry name" value="EF_Tu_B"/>
    <property type="match status" value="1"/>
</dbReference>
<dbReference type="InterPro" id="IPR041709">
    <property type="entry name" value="EF-Tu_GTP-bd"/>
</dbReference>
<dbReference type="InterPro" id="IPR050055">
    <property type="entry name" value="EF-Tu_GTPase"/>
</dbReference>
<dbReference type="InterPro" id="IPR004161">
    <property type="entry name" value="EFTu-like_2"/>
</dbReference>
<dbReference type="InterPro" id="IPR033720">
    <property type="entry name" value="EFTU_2"/>
</dbReference>
<dbReference type="InterPro" id="IPR031157">
    <property type="entry name" value="G_TR_CS"/>
</dbReference>
<dbReference type="InterPro" id="IPR027417">
    <property type="entry name" value="P-loop_NTPase"/>
</dbReference>
<dbReference type="InterPro" id="IPR005225">
    <property type="entry name" value="Small_GTP-bd"/>
</dbReference>
<dbReference type="InterPro" id="IPR000795">
    <property type="entry name" value="T_Tr_GTP-bd_dom"/>
</dbReference>
<dbReference type="InterPro" id="IPR009000">
    <property type="entry name" value="Transl_B-barrel_sf"/>
</dbReference>
<dbReference type="InterPro" id="IPR009001">
    <property type="entry name" value="Transl_elong_EF1A/Init_IF2_C"/>
</dbReference>
<dbReference type="InterPro" id="IPR004541">
    <property type="entry name" value="Transl_elong_EFTu/EF1A_bac/org"/>
</dbReference>
<dbReference type="InterPro" id="IPR004160">
    <property type="entry name" value="Transl_elong_EFTu/EF1A_C"/>
</dbReference>
<dbReference type="NCBIfam" id="TIGR00485">
    <property type="entry name" value="EF-Tu"/>
    <property type="match status" value="1"/>
</dbReference>
<dbReference type="NCBIfam" id="NF000766">
    <property type="entry name" value="PRK00049.1"/>
    <property type="match status" value="1"/>
</dbReference>
<dbReference type="NCBIfam" id="NF009372">
    <property type="entry name" value="PRK12735.1"/>
    <property type="match status" value="1"/>
</dbReference>
<dbReference type="NCBIfam" id="NF009373">
    <property type="entry name" value="PRK12736.1"/>
    <property type="match status" value="1"/>
</dbReference>
<dbReference type="NCBIfam" id="TIGR00231">
    <property type="entry name" value="small_GTP"/>
    <property type="match status" value="1"/>
</dbReference>
<dbReference type="PANTHER" id="PTHR43721:SF22">
    <property type="entry name" value="ELONGATION FACTOR TU, MITOCHONDRIAL"/>
    <property type="match status" value="1"/>
</dbReference>
<dbReference type="PANTHER" id="PTHR43721">
    <property type="entry name" value="ELONGATION FACTOR TU-RELATED"/>
    <property type="match status" value="1"/>
</dbReference>
<dbReference type="Pfam" id="PF00009">
    <property type="entry name" value="GTP_EFTU"/>
    <property type="match status" value="1"/>
</dbReference>
<dbReference type="Pfam" id="PF03144">
    <property type="entry name" value="GTP_EFTU_D2"/>
    <property type="match status" value="1"/>
</dbReference>
<dbReference type="Pfam" id="PF03143">
    <property type="entry name" value="GTP_EFTU_D3"/>
    <property type="match status" value="1"/>
</dbReference>
<dbReference type="PRINTS" id="PR00315">
    <property type="entry name" value="ELONGATNFCT"/>
</dbReference>
<dbReference type="SUPFAM" id="SSF50465">
    <property type="entry name" value="EF-Tu/eEF-1alpha/eIF2-gamma C-terminal domain"/>
    <property type="match status" value="1"/>
</dbReference>
<dbReference type="SUPFAM" id="SSF52540">
    <property type="entry name" value="P-loop containing nucleoside triphosphate hydrolases"/>
    <property type="match status" value="1"/>
</dbReference>
<dbReference type="SUPFAM" id="SSF50447">
    <property type="entry name" value="Translation proteins"/>
    <property type="match status" value="1"/>
</dbReference>
<dbReference type="PROSITE" id="PS00301">
    <property type="entry name" value="G_TR_1"/>
    <property type="match status" value="1"/>
</dbReference>
<dbReference type="PROSITE" id="PS51722">
    <property type="entry name" value="G_TR_2"/>
    <property type="match status" value="1"/>
</dbReference>
<proteinExistence type="inferred from homology"/>